<comment type="function">
    <text evidence="1">Catalyzes the methylthiolation of N6-(dimethylallyl)adenosine (i(6)A), leading to the formation of 2-methylthio-N6-(dimethylallyl)adenosine (ms(2)i(6)A) at position 37 in tRNAs that read codons beginning with uridine.</text>
</comment>
<comment type="catalytic activity">
    <reaction evidence="1">
        <text>N(6)-dimethylallyladenosine(37) in tRNA + (sulfur carrier)-SH + AH2 + 2 S-adenosyl-L-methionine = 2-methylsulfanyl-N(6)-dimethylallyladenosine(37) in tRNA + (sulfur carrier)-H + 5'-deoxyadenosine + L-methionine + A + S-adenosyl-L-homocysteine + 2 H(+)</text>
        <dbReference type="Rhea" id="RHEA:37067"/>
        <dbReference type="Rhea" id="RHEA-COMP:10375"/>
        <dbReference type="Rhea" id="RHEA-COMP:10376"/>
        <dbReference type="Rhea" id="RHEA-COMP:14737"/>
        <dbReference type="Rhea" id="RHEA-COMP:14739"/>
        <dbReference type="ChEBI" id="CHEBI:13193"/>
        <dbReference type="ChEBI" id="CHEBI:15378"/>
        <dbReference type="ChEBI" id="CHEBI:17319"/>
        <dbReference type="ChEBI" id="CHEBI:17499"/>
        <dbReference type="ChEBI" id="CHEBI:29917"/>
        <dbReference type="ChEBI" id="CHEBI:57844"/>
        <dbReference type="ChEBI" id="CHEBI:57856"/>
        <dbReference type="ChEBI" id="CHEBI:59789"/>
        <dbReference type="ChEBI" id="CHEBI:64428"/>
        <dbReference type="ChEBI" id="CHEBI:74415"/>
        <dbReference type="ChEBI" id="CHEBI:74417"/>
        <dbReference type="EC" id="2.8.4.3"/>
    </reaction>
</comment>
<comment type="cofactor">
    <cofactor evidence="1">
        <name>[4Fe-4S] cluster</name>
        <dbReference type="ChEBI" id="CHEBI:49883"/>
    </cofactor>
    <text evidence="1">Binds 2 [4Fe-4S] clusters. One cluster is coordinated with 3 cysteines and an exchangeable S-adenosyl-L-methionine.</text>
</comment>
<comment type="subunit">
    <text evidence="1">Monomer.</text>
</comment>
<comment type="subcellular location">
    <subcellularLocation>
        <location evidence="1">Cytoplasm</location>
    </subcellularLocation>
</comment>
<comment type="similarity">
    <text evidence="1">Belongs to the methylthiotransferase family. MiaB subfamily.</text>
</comment>
<accession>A1APR6</accession>
<reference key="1">
    <citation type="submission" date="2006-10" db="EMBL/GenBank/DDBJ databases">
        <title>Complete sequence of chromosome of Pelobacter propionicus DSM 2379.</title>
        <authorList>
            <consortium name="US DOE Joint Genome Institute"/>
            <person name="Copeland A."/>
            <person name="Lucas S."/>
            <person name="Lapidus A."/>
            <person name="Barry K."/>
            <person name="Detter J.C."/>
            <person name="Glavina del Rio T."/>
            <person name="Hammon N."/>
            <person name="Israni S."/>
            <person name="Dalin E."/>
            <person name="Tice H."/>
            <person name="Pitluck S."/>
            <person name="Saunders E."/>
            <person name="Brettin T."/>
            <person name="Bruce D."/>
            <person name="Han C."/>
            <person name="Tapia R."/>
            <person name="Schmutz J."/>
            <person name="Larimer F."/>
            <person name="Land M."/>
            <person name="Hauser L."/>
            <person name="Kyrpides N."/>
            <person name="Kim E."/>
            <person name="Lovley D."/>
            <person name="Richardson P."/>
        </authorList>
    </citation>
    <scope>NUCLEOTIDE SEQUENCE [LARGE SCALE GENOMIC DNA]</scope>
    <source>
        <strain>DSM 2379 / NBRC 103807 / OttBd1</strain>
    </source>
</reference>
<evidence type="ECO:0000255" key="1">
    <source>
        <dbReference type="HAMAP-Rule" id="MF_01864"/>
    </source>
</evidence>
<evidence type="ECO:0000255" key="2">
    <source>
        <dbReference type="PROSITE-ProRule" id="PRU01266"/>
    </source>
</evidence>
<protein>
    <recommendedName>
        <fullName evidence="1">tRNA-2-methylthio-N(6)-dimethylallyladenosine synthase</fullName>
        <ecNumber evidence="1">2.8.4.3</ecNumber>
    </recommendedName>
    <alternativeName>
        <fullName evidence="1">(Dimethylallyl)adenosine tRNA methylthiotransferase MiaB</fullName>
    </alternativeName>
    <alternativeName>
        <fullName evidence="1">tRNA-i(6)A37 methylthiotransferase</fullName>
    </alternativeName>
</protein>
<proteinExistence type="inferred from homology"/>
<gene>
    <name evidence="1" type="primary">miaB</name>
    <name type="ordered locus">Ppro_1724</name>
</gene>
<feature type="chain" id="PRO_0000374429" description="tRNA-2-methylthio-N(6)-dimethylallyladenosine synthase">
    <location>
        <begin position="1"/>
        <end position="440"/>
    </location>
</feature>
<feature type="domain" description="MTTase N-terminal" evidence="1">
    <location>
        <begin position="4"/>
        <end position="120"/>
    </location>
</feature>
<feature type="domain" description="Radical SAM core" evidence="2">
    <location>
        <begin position="144"/>
        <end position="374"/>
    </location>
</feature>
<feature type="domain" description="TRAM" evidence="1">
    <location>
        <begin position="377"/>
        <end position="439"/>
    </location>
</feature>
<feature type="binding site" evidence="1">
    <location>
        <position position="13"/>
    </location>
    <ligand>
        <name>[4Fe-4S] cluster</name>
        <dbReference type="ChEBI" id="CHEBI:49883"/>
        <label>1</label>
    </ligand>
</feature>
<feature type="binding site" evidence="1">
    <location>
        <position position="49"/>
    </location>
    <ligand>
        <name>[4Fe-4S] cluster</name>
        <dbReference type="ChEBI" id="CHEBI:49883"/>
        <label>1</label>
    </ligand>
</feature>
<feature type="binding site" evidence="1">
    <location>
        <position position="83"/>
    </location>
    <ligand>
        <name>[4Fe-4S] cluster</name>
        <dbReference type="ChEBI" id="CHEBI:49883"/>
        <label>1</label>
    </ligand>
</feature>
<feature type="binding site" evidence="1">
    <location>
        <position position="158"/>
    </location>
    <ligand>
        <name>[4Fe-4S] cluster</name>
        <dbReference type="ChEBI" id="CHEBI:49883"/>
        <label>2</label>
        <note>4Fe-4S-S-AdoMet</note>
    </ligand>
</feature>
<feature type="binding site" evidence="1">
    <location>
        <position position="162"/>
    </location>
    <ligand>
        <name>[4Fe-4S] cluster</name>
        <dbReference type="ChEBI" id="CHEBI:49883"/>
        <label>2</label>
        <note>4Fe-4S-S-AdoMet</note>
    </ligand>
</feature>
<feature type="binding site" evidence="1">
    <location>
        <position position="165"/>
    </location>
    <ligand>
        <name>[4Fe-4S] cluster</name>
        <dbReference type="ChEBI" id="CHEBI:49883"/>
        <label>2</label>
        <note>4Fe-4S-S-AdoMet</note>
    </ligand>
</feature>
<organism>
    <name type="scientific">Pelobacter propionicus (strain DSM 2379 / NBRC 103807 / OttBd1)</name>
    <dbReference type="NCBI Taxonomy" id="338966"/>
    <lineage>
        <taxon>Bacteria</taxon>
        <taxon>Pseudomonadati</taxon>
        <taxon>Thermodesulfobacteriota</taxon>
        <taxon>Desulfuromonadia</taxon>
        <taxon>Desulfuromonadales</taxon>
        <taxon>Desulfuromonadaceae</taxon>
        <taxon>Pelobacter</taxon>
    </lineage>
</organism>
<name>MIAB_PELPD</name>
<sequence length="440" mass="49263">MTQNYVYIETFGCQMNVNDSERILTMLADIGYVPTQEPARARLILLNTCSVRAGAEEKVYRRLENLVVLKRHNSRLIIGVGGCVAQQEGEALLERIPKLDLVFGTHNLHLLNDMVLAAERGERKSETSFIDNDQRLDLFPPIRGTARISSFVTVMQGCENYCSYCIVPYVRGPEVSRRSGDILREVRQLADQGVREVALLGQNVNSYGLKSSAEPSFAELIRLVAAVDGIRRIRFFTSHPKDMSPELIACFGDLPALCSQLHLPAQSGSDNVLARMGRGYTREEYLEKVRALRAVRPDIVFTGDMIVGFPGETEEEFQETLSLMEEVRYIDLFSFAYSPRPGTRAAELADDLSRGEKQSRLERLQALQKRTTMEINDVLLGTRQTVLVEREGKRPGQISGKADNGRTVNFSGDRSLIGTFVDLRIIQVFQNSLLGELLPG</sequence>
<dbReference type="EC" id="2.8.4.3" evidence="1"/>
<dbReference type="EMBL" id="CP000482">
    <property type="protein sequence ID" value="ABK99336.1"/>
    <property type="molecule type" value="Genomic_DNA"/>
</dbReference>
<dbReference type="RefSeq" id="WP_011735613.1">
    <property type="nucleotide sequence ID" value="NC_008609.1"/>
</dbReference>
<dbReference type="SMR" id="A1APR6"/>
<dbReference type="STRING" id="338966.Ppro_1724"/>
<dbReference type="KEGG" id="ppd:Ppro_1724"/>
<dbReference type="eggNOG" id="COG0621">
    <property type="taxonomic scope" value="Bacteria"/>
</dbReference>
<dbReference type="HOGENOM" id="CLU_018697_2_0_7"/>
<dbReference type="OrthoDB" id="9805215at2"/>
<dbReference type="Proteomes" id="UP000006732">
    <property type="component" value="Chromosome"/>
</dbReference>
<dbReference type="GO" id="GO:0005829">
    <property type="term" value="C:cytosol"/>
    <property type="evidence" value="ECO:0007669"/>
    <property type="project" value="TreeGrafter"/>
</dbReference>
<dbReference type="GO" id="GO:0051539">
    <property type="term" value="F:4 iron, 4 sulfur cluster binding"/>
    <property type="evidence" value="ECO:0007669"/>
    <property type="project" value="UniProtKB-UniRule"/>
</dbReference>
<dbReference type="GO" id="GO:0046872">
    <property type="term" value="F:metal ion binding"/>
    <property type="evidence" value="ECO:0007669"/>
    <property type="project" value="UniProtKB-KW"/>
</dbReference>
<dbReference type="GO" id="GO:0035597">
    <property type="term" value="F:N6-isopentenyladenosine methylthiotransferase activity"/>
    <property type="evidence" value="ECO:0007669"/>
    <property type="project" value="TreeGrafter"/>
</dbReference>
<dbReference type="CDD" id="cd01335">
    <property type="entry name" value="Radical_SAM"/>
    <property type="match status" value="1"/>
</dbReference>
<dbReference type="FunFam" id="3.40.50.12160:FF:000003">
    <property type="entry name" value="CDK5 regulatory subunit-associated protein 1"/>
    <property type="match status" value="1"/>
</dbReference>
<dbReference type="FunFam" id="3.80.30.20:FF:000001">
    <property type="entry name" value="tRNA-2-methylthio-N(6)-dimethylallyladenosine synthase 2"/>
    <property type="match status" value="1"/>
</dbReference>
<dbReference type="Gene3D" id="3.40.50.12160">
    <property type="entry name" value="Methylthiotransferase, N-terminal domain"/>
    <property type="match status" value="1"/>
</dbReference>
<dbReference type="Gene3D" id="3.80.30.20">
    <property type="entry name" value="tm_1862 like domain"/>
    <property type="match status" value="1"/>
</dbReference>
<dbReference type="HAMAP" id="MF_01864">
    <property type="entry name" value="tRNA_metthiotr_MiaB"/>
    <property type="match status" value="1"/>
</dbReference>
<dbReference type="InterPro" id="IPR006638">
    <property type="entry name" value="Elp3/MiaA/NifB-like_rSAM"/>
</dbReference>
<dbReference type="InterPro" id="IPR005839">
    <property type="entry name" value="Methylthiotransferase"/>
</dbReference>
<dbReference type="InterPro" id="IPR020612">
    <property type="entry name" value="Methylthiotransferase_CS"/>
</dbReference>
<dbReference type="InterPro" id="IPR013848">
    <property type="entry name" value="Methylthiotransferase_N"/>
</dbReference>
<dbReference type="InterPro" id="IPR038135">
    <property type="entry name" value="Methylthiotransferase_N_sf"/>
</dbReference>
<dbReference type="InterPro" id="IPR006463">
    <property type="entry name" value="MiaB_methiolase"/>
</dbReference>
<dbReference type="InterPro" id="IPR007197">
    <property type="entry name" value="rSAM"/>
</dbReference>
<dbReference type="InterPro" id="IPR023404">
    <property type="entry name" value="rSAM_horseshoe"/>
</dbReference>
<dbReference type="InterPro" id="IPR002792">
    <property type="entry name" value="TRAM_dom"/>
</dbReference>
<dbReference type="NCBIfam" id="TIGR01574">
    <property type="entry name" value="miaB-methiolase"/>
    <property type="match status" value="1"/>
</dbReference>
<dbReference type="NCBIfam" id="TIGR00089">
    <property type="entry name" value="MiaB/RimO family radical SAM methylthiotransferase"/>
    <property type="match status" value="1"/>
</dbReference>
<dbReference type="PANTHER" id="PTHR43020">
    <property type="entry name" value="CDK5 REGULATORY SUBUNIT-ASSOCIATED PROTEIN 1"/>
    <property type="match status" value="1"/>
</dbReference>
<dbReference type="PANTHER" id="PTHR43020:SF2">
    <property type="entry name" value="MITOCHONDRIAL TRNA METHYLTHIOTRANSFERASE CDK5RAP1"/>
    <property type="match status" value="1"/>
</dbReference>
<dbReference type="Pfam" id="PF04055">
    <property type="entry name" value="Radical_SAM"/>
    <property type="match status" value="1"/>
</dbReference>
<dbReference type="Pfam" id="PF01938">
    <property type="entry name" value="TRAM"/>
    <property type="match status" value="1"/>
</dbReference>
<dbReference type="Pfam" id="PF00919">
    <property type="entry name" value="UPF0004"/>
    <property type="match status" value="1"/>
</dbReference>
<dbReference type="SFLD" id="SFLDF00273">
    <property type="entry name" value="(dimethylallyl)adenosine_tRNA"/>
    <property type="match status" value="1"/>
</dbReference>
<dbReference type="SFLD" id="SFLDG01082">
    <property type="entry name" value="B12-binding_domain_containing"/>
    <property type="match status" value="1"/>
</dbReference>
<dbReference type="SFLD" id="SFLDG01061">
    <property type="entry name" value="methylthiotransferase"/>
    <property type="match status" value="1"/>
</dbReference>
<dbReference type="SMART" id="SM00729">
    <property type="entry name" value="Elp3"/>
    <property type="match status" value="1"/>
</dbReference>
<dbReference type="SUPFAM" id="SSF102114">
    <property type="entry name" value="Radical SAM enzymes"/>
    <property type="match status" value="1"/>
</dbReference>
<dbReference type="PROSITE" id="PS51449">
    <property type="entry name" value="MTTASE_N"/>
    <property type="match status" value="1"/>
</dbReference>
<dbReference type="PROSITE" id="PS01278">
    <property type="entry name" value="MTTASE_RADICAL"/>
    <property type="match status" value="1"/>
</dbReference>
<dbReference type="PROSITE" id="PS51918">
    <property type="entry name" value="RADICAL_SAM"/>
    <property type="match status" value="1"/>
</dbReference>
<dbReference type="PROSITE" id="PS50926">
    <property type="entry name" value="TRAM"/>
    <property type="match status" value="1"/>
</dbReference>
<keyword id="KW-0004">4Fe-4S</keyword>
<keyword id="KW-0963">Cytoplasm</keyword>
<keyword id="KW-0408">Iron</keyword>
<keyword id="KW-0411">Iron-sulfur</keyword>
<keyword id="KW-0479">Metal-binding</keyword>
<keyword id="KW-1185">Reference proteome</keyword>
<keyword id="KW-0949">S-adenosyl-L-methionine</keyword>
<keyword id="KW-0808">Transferase</keyword>
<keyword id="KW-0819">tRNA processing</keyword>